<reference key="1">
    <citation type="journal article" date="2004" name="Science">
        <title>The 1.2-megabase genome sequence of Mimivirus.</title>
        <authorList>
            <person name="Raoult D."/>
            <person name="Audic S."/>
            <person name="Robert C."/>
            <person name="Abergel C."/>
            <person name="Renesto P."/>
            <person name="Ogata H."/>
            <person name="La Scola B."/>
            <person name="Susan M."/>
            <person name="Claverie J.-M."/>
        </authorList>
    </citation>
    <scope>NUCLEOTIDE SEQUENCE [LARGE SCALE GENOMIC DNA]</scope>
    <source>
        <strain>Rowbotham-Bradford</strain>
    </source>
</reference>
<accession>Q5UQ93</accession>
<proteinExistence type="predicted"/>
<organism>
    <name type="scientific">Acanthamoeba polyphaga mimivirus</name>
    <name type="common">APMV</name>
    <dbReference type="NCBI Taxonomy" id="212035"/>
    <lineage>
        <taxon>Viruses</taxon>
        <taxon>Varidnaviria</taxon>
        <taxon>Bamfordvirae</taxon>
        <taxon>Nucleocytoviricota</taxon>
        <taxon>Megaviricetes</taxon>
        <taxon>Imitervirales</taxon>
        <taxon>Mimiviridae</taxon>
        <taxon>Megamimivirinae</taxon>
        <taxon>Mimivirus</taxon>
        <taxon>Mimivirus bradfordmassiliense</taxon>
    </lineage>
</organism>
<sequence length="164" mass="19129">MGIFKVEKYIGSDTPGLVYQLNNPWLVYSENTNVYKFETIAGFWNLFSTKLTNKRLSVLRDNTMTNDYQSHCYFVVIDLNNNIDSYQVFMKLLLGLIGETLSNGYLINGLTWINDSGNKRIIIWLSNTVNTVDKICFTEEYNDYIFHQNNCHNITYMSLNESKQ</sequence>
<feature type="chain" id="PRO_0000244003" description="Uncharacterized protein L529">
    <location>
        <begin position="1"/>
        <end position="164"/>
    </location>
</feature>
<protein>
    <recommendedName>
        <fullName>Uncharacterized protein L529</fullName>
    </recommendedName>
</protein>
<dbReference type="EMBL" id="AY653733">
    <property type="protein sequence ID" value="AAV50793.1"/>
    <property type="molecule type" value="Genomic_DNA"/>
</dbReference>
<dbReference type="SMR" id="Q5UQ93"/>
<dbReference type="KEGG" id="vg:9925161"/>
<dbReference type="OrthoDB" id="35489at10239"/>
<dbReference type="Proteomes" id="UP000001134">
    <property type="component" value="Genome"/>
</dbReference>
<dbReference type="Gene3D" id="3.30.760.10">
    <property type="entry name" value="RNA Cap, Translation Initiation Factor Eif4e"/>
    <property type="match status" value="1"/>
</dbReference>
<dbReference type="InterPro" id="IPR023398">
    <property type="entry name" value="TIF_eIF4e-like"/>
</dbReference>
<dbReference type="SUPFAM" id="SSF55418">
    <property type="entry name" value="eIF4e-like"/>
    <property type="match status" value="1"/>
</dbReference>
<gene>
    <name type="ordered locus">MIMI_L529</name>
</gene>
<name>YL529_MIMIV</name>
<keyword id="KW-1185">Reference proteome</keyword>
<organismHost>
    <name type="scientific">Acanthamoeba polyphaga</name>
    <name type="common">Amoeba</name>
    <dbReference type="NCBI Taxonomy" id="5757"/>
</organismHost>